<name>RUXF_DICDI</name>
<evidence type="ECO:0000250" key="1">
    <source>
        <dbReference type="UniProtKB" id="P62306"/>
    </source>
</evidence>
<evidence type="ECO:0000255" key="2">
    <source>
        <dbReference type="PROSITE-ProRule" id="PRU01346"/>
    </source>
</evidence>
<evidence type="ECO:0000305" key="3"/>
<accession>Q54XP2</accession>
<gene>
    <name type="primary">snrpf</name>
    <name type="ORF">DDB_G0278821</name>
</gene>
<dbReference type="EMBL" id="AAFI02000024">
    <property type="protein sequence ID" value="EAL68012.1"/>
    <property type="molecule type" value="Genomic_DNA"/>
</dbReference>
<dbReference type="RefSeq" id="XP_641988.1">
    <property type="nucleotide sequence ID" value="XM_636896.1"/>
</dbReference>
<dbReference type="SMR" id="Q54XP2"/>
<dbReference type="FunCoup" id="Q54XP2">
    <property type="interactions" value="662"/>
</dbReference>
<dbReference type="STRING" id="44689.Q54XP2"/>
<dbReference type="PaxDb" id="44689-DDB0233199"/>
<dbReference type="EnsemblProtists" id="EAL68012">
    <property type="protein sequence ID" value="EAL68012"/>
    <property type="gene ID" value="DDB_G0278821"/>
</dbReference>
<dbReference type="GeneID" id="8621720"/>
<dbReference type="KEGG" id="ddi:DDB_G0278821"/>
<dbReference type="dictyBase" id="DDB_G0278821">
    <property type="gene designation" value="snrpF"/>
</dbReference>
<dbReference type="VEuPathDB" id="AmoebaDB:DDB_G0278821"/>
<dbReference type="eggNOG" id="KOG3482">
    <property type="taxonomic scope" value="Eukaryota"/>
</dbReference>
<dbReference type="HOGENOM" id="CLU_076902_12_3_1"/>
<dbReference type="InParanoid" id="Q54XP2"/>
<dbReference type="OMA" id="GYMNVQL"/>
<dbReference type="PhylomeDB" id="Q54XP2"/>
<dbReference type="Reactome" id="R-DDI-111367">
    <property type="pathway name" value="SLBP independent Processing of Histone Pre-mRNAs"/>
</dbReference>
<dbReference type="Reactome" id="R-DDI-72163">
    <property type="pathway name" value="mRNA Splicing - Major Pathway"/>
</dbReference>
<dbReference type="Reactome" id="R-DDI-73856">
    <property type="pathway name" value="RNA Polymerase II Transcription Termination"/>
</dbReference>
<dbReference type="Reactome" id="R-DDI-77588">
    <property type="pathway name" value="SLBP Dependent Processing of Replication-Dependent Histone Pre-mRNAs"/>
</dbReference>
<dbReference type="PRO" id="PR:Q54XP2"/>
<dbReference type="Proteomes" id="UP000002195">
    <property type="component" value="Chromosome 3"/>
</dbReference>
<dbReference type="GO" id="GO:0071013">
    <property type="term" value="C:catalytic step 2 spliceosome"/>
    <property type="evidence" value="ECO:0000318"/>
    <property type="project" value="GO_Central"/>
</dbReference>
<dbReference type="GO" id="GO:0005829">
    <property type="term" value="C:cytosol"/>
    <property type="evidence" value="ECO:0007669"/>
    <property type="project" value="UniProtKB-SubCell"/>
</dbReference>
<dbReference type="GO" id="GO:0005634">
    <property type="term" value="C:nucleus"/>
    <property type="evidence" value="ECO:0000250"/>
    <property type="project" value="UniProtKB"/>
</dbReference>
<dbReference type="GO" id="GO:0034715">
    <property type="term" value="C:pICln-Sm protein complex"/>
    <property type="evidence" value="ECO:0000318"/>
    <property type="project" value="GO_Central"/>
</dbReference>
<dbReference type="GO" id="GO:0005685">
    <property type="term" value="C:U1 snRNP"/>
    <property type="evidence" value="ECO:0000250"/>
    <property type="project" value="UniProtKB"/>
</dbReference>
<dbReference type="GO" id="GO:0071007">
    <property type="term" value="C:U2-type catalytic step 2 spliceosome"/>
    <property type="evidence" value="ECO:0000250"/>
    <property type="project" value="UniProtKB"/>
</dbReference>
<dbReference type="GO" id="GO:0071005">
    <property type="term" value="C:U2-type precatalytic spliceosome"/>
    <property type="evidence" value="ECO:0000250"/>
    <property type="project" value="UniProtKB"/>
</dbReference>
<dbReference type="GO" id="GO:0005687">
    <property type="term" value="C:U4 snRNP"/>
    <property type="evidence" value="ECO:0000250"/>
    <property type="project" value="UniProtKB"/>
</dbReference>
<dbReference type="GO" id="GO:0046540">
    <property type="term" value="C:U4/U6 x U5 tri-snRNP complex"/>
    <property type="evidence" value="ECO:0000250"/>
    <property type="project" value="UniProtKB"/>
</dbReference>
<dbReference type="GO" id="GO:0003723">
    <property type="term" value="F:RNA binding"/>
    <property type="evidence" value="ECO:0000318"/>
    <property type="project" value="GO_Central"/>
</dbReference>
<dbReference type="GO" id="GO:0000398">
    <property type="term" value="P:mRNA splicing, via spliceosome"/>
    <property type="evidence" value="ECO:0000250"/>
    <property type="project" value="UniProtKB"/>
</dbReference>
<dbReference type="CDD" id="cd01722">
    <property type="entry name" value="Sm_F"/>
    <property type="match status" value="1"/>
</dbReference>
<dbReference type="Gene3D" id="2.30.30.100">
    <property type="match status" value="1"/>
</dbReference>
<dbReference type="InterPro" id="IPR016487">
    <property type="entry name" value="Lsm6/sSmF"/>
</dbReference>
<dbReference type="InterPro" id="IPR010920">
    <property type="entry name" value="LSM_dom_sf"/>
</dbReference>
<dbReference type="InterPro" id="IPR047575">
    <property type="entry name" value="Sm"/>
</dbReference>
<dbReference type="InterPro" id="IPR001163">
    <property type="entry name" value="Sm_dom_euk/arc"/>
</dbReference>
<dbReference type="InterPro" id="IPR034100">
    <property type="entry name" value="Sm_F"/>
</dbReference>
<dbReference type="PANTHER" id="PTHR11021:SF0">
    <property type="entry name" value="SMALL NUCLEAR RIBONUCLEOPROTEIN F"/>
    <property type="match status" value="1"/>
</dbReference>
<dbReference type="PANTHER" id="PTHR11021">
    <property type="entry name" value="SMALL NUCLEAR RIBONUCLEOPROTEIN F SNRNP-F"/>
    <property type="match status" value="1"/>
</dbReference>
<dbReference type="Pfam" id="PF01423">
    <property type="entry name" value="LSM"/>
    <property type="match status" value="1"/>
</dbReference>
<dbReference type="PIRSF" id="PIRSF006609">
    <property type="entry name" value="snRNP_SmF"/>
    <property type="match status" value="1"/>
</dbReference>
<dbReference type="SMART" id="SM00651">
    <property type="entry name" value="Sm"/>
    <property type="match status" value="1"/>
</dbReference>
<dbReference type="SUPFAM" id="SSF50182">
    <property type="entry name" value="Sm-like ribonucleoproteins"/>
    <property type="match status" value="1"/>
</dbReference>
<dbReference type="PROSITE" id="PS52002">
    <property type="entry name" value="SM"/>
    <property type="match status" value="1"/>
</dbReference>
<protein>
    <recommendedName>
        <fullName>Small nuclear ribonucleoprotein F</fullName>
        <shortName>snRNP-F</shortName>
    </recommendedName>
    <alternativeName>
        <fullName>Sm protein F</fullName>
        <shortName>Sm-F</shortName>
        <shortName>SmF</shortName>
    </alternativeName>
</protein>
<reference key="1">
    <citation type="journal article" date="2005" name="Nature">
        <title>The genome of the social amoeba Dictyostelium discoideum.</title>
        <authorList>
            <person name="Eichinger L."/>
            <person name="Pachebat J.A."/>
            <person name="Gloeckner G."/>
            <person name="Rajandream M.A."/>
            <person name="Sucgang R."/>
            <person name="Berriman M."/>
            <person name="Song J."/>
            <person name="Olsen R."/>
            <person name="Szafranski K."/>
            <person name="Xu Q."/>
            <person name="Tunggal B."/>
            <person name="Kummerfeld S."/>
            <person name="Madera M."/>
            <person name="Konfortov B.A."/>
            <person name="Rivero F."/>
            <person name="Bankier A.T."/>
            <person name="Lehmann R."/>
            <person name="Hamlin N."/>
            <person name="Davies R."/>
            <person name="Gaudet P."/>
            <person name="Fey P."/>
            <person name="Pilcher K."/>
            <person name="Chen G."/>
            <person name="Saunders D."/>
            <person name="Sodergren E.J."/>
            <person name="Davis P."/>
            <person name="Kerhornou A."/>
            <person name="Nie X."/>
            <person name="Hall N."/>
            <person name="Anjard C."/>
            <person name="Hemphill L."/>
            <person name="Bason N."/>
            <person name="Farbrother P."/>
            <person name="Desany B."/>
            <person name="Just E."/>
            <person name="Morio T."/>
            <person name="Rost R."/>
            <person name="Churcher C.M."/>
            <person name="Cooper J."/>
            <person name="Haydock S."/>
            <person name="van Driessche N."/>
            <person name="Cronin A."/>
            <person name="Goodhead I."/>
            <person name="Muzny D.M."/>
            <person name="Mourier T."/>
            <person name="Pain A."/>
            <person name="Lu M."/>
            <person name="Harper D."/>
            <person name="Lindsay R."/>
            <person name="Hauser H."/>
            <person name="James K.D."/>
            <person name="Quiles M."/>
            <person name="Madan Babu M."/>
            <person name="Saito T."/>
            <person name="Buchrieser C."/>
            <person name="Wardroper A."/>
            <person name="Felder M."/>
            <person name="Thangavelu M."/>
            <person name="Johnson D."/>
            <person name="Knights A."/>
            <person name="Loulseged H."/>
            <person name="Mungall K.L."/>
            <person name="Oliver K."/>
            <person name="Price C."/>
            <person name="Quail M.A."/>
            <person name="Urushihara H."/>
            <person name="Hernandez J."/>
            <person name="Rabbinowitsch E."/>
            <person name="Steffen D."/>
            <person name="Sanders M."/>
            <person name="Ma J."/>
            <person name="Kohara Y."/>
            <person name="Sharp S."/>
            <person name="Simmonds M.N."/>
            <person name="Spiegler S."/>
            <person name="Tivey A."/>
            <person name="Sugano S."/>
            <person name="White B."/>
            <person name="Walker D."/>
            <person name="Woodward J.R."/>
            <person name="Winckler T."/>
            <person name="Tanaka Y."/>
            <person name="Shaulsky G."/>
            <person name="Schleicher M."/>
            <person name="Weinstock G.M."/>
            <person name="Rosenthal A."/>
            <person name="Cox E.C."/>
            <person name="Chisholm R.L."/>
            <person name="Gibbs R.A."/>
            <person name="Loomis W.F."/>
            <person name="Platzer M."/>
            <person name="Kay R.R."/>
            <person name="Williams J.G."/>
            <person name="Dear P.H."/>
            <person name="Noegel A.A."/>
            <person name="Barrell B.G."/>
            <person name="Kuspa A."/>
        </authorList>
    </citation>
    <scope>NUCLEOTIDE SEQUENCE [LARGE SCALE GENOMIC DNA]</scope>
    <source>
        <strain>AX4</strain>
    </source>
</reference>
<organism>
    <name type="scientific">Dictyostelium discoideum</name>
    <name type="common">Social amoeba</name>
    <dbReference type="NCBI Taxonomy" id="44689"/>
    <lineage>
        <taxon>Eukaryota</taxon>
        <taxon>Amoebozoa</taxon>
        <taxon>Evosea</taxon>
        <taxon>Eumycetozoa</taxon>
        <taxon>Dictyostelia</taxon>
        <taxon>Dictyosteliales</taxon>
        <taxon>Dictyosteliaceae</taxon>
        <taxon>Dictyostelium</taxon>
    </lineage>
</organism>
<comment type="function">
    <text evidence="1">Plays a role in pre-mRNA splicing as a core component of the spliceosomal U1, U2, U4 and U5 small nuclear ribonucleoproteins (snRNPs), the building blocks of the spliceosome. Component of both the pre-catalytic spliceosome B complex and activated spliceosome C complexes. Is also a component of the minor U12 spliceosome.</text>
</comment>
<comment type="subunit">
    <text evidence="1">Core component of the spliceosomal U1, U2, U4 and U5 small nuclear ribonucleoproteins (snRNPs), the building blocks of the spliceosome. Most spliceosomal snRNPs contain a common set of Sm proteins, SNRPB, SNRPD1, SNRPD2, SNRPD3, SNRPE, SNRPF and SNRPG that assemble in a heptameric protein ring on the Sm site of the small nuclear RNA to form the core snRNP. Component of the U1 snRNP. Component of the U4/U6-U5 tri-snRNP complex. Component of the U7 snRNP complex. Component of the U11/U12 snRNPs that are part of the U12-type spliceosome. Part of the SMN-Sm complex that catalyzes core snRNPs assembly.</text>
</comment>
<comment type="subcellular location">
    <subcellularLocation>
        <location evidence="1">Cytoplasm</location>
        <location evidence="1">Cytosol</location>
    </subcellularLocation>
    <subcellularLocation>
        <location evidence="1">Nucleus</location>
    </subcellularLocation>
    <text evidence="1">SMN-mediated assembly into core snRNPs occurs in the cytosol before SMN-mediated transport to the nucleus to be included in spliceosomes.</text>
</comment>
<comment type="similarity">
    <text evidence="3">Belongs to the snRNP Sm proteins family. SmF/LSm6 subfamily.</text>
</comment>
<keyword id="KW-0963">Cytoplasm</keyword>
<keyword id="KW-0507">mRNA processing</keyword>
<keyword id="KW-0508">mRNA splicing</keyword>
<keyword id="KW-0539">Nucleus</keyword>
<keyword id="KW-1185">Reference proteome</keyword>
<keyword id="KW-0687">Ribonucleoprotein</keyword>
<keyword id="KW-0694">RNA-binding</keyword>
<keyword id="KW-0747">Spliceosome</keyword>
<sequence>MSKIEALAPKPFLYDLKGKKIAVRLKWGGMEYRGILASVDSYMNLQLAATEEWIDGANKGPLGEVLIRCNNVLFVRGIDDEQQQSQQQQQE</sequence>
<feature type="chain" id="PRO_0000328184" description="Small nuclear ribonucleoprotein F">
    <location>
        <begin position="1"/>
        <end position="91"/>
    </location>
</feature>
<feature type="domain" description="Sm" evidence="2">
    <location>
        <begin position="8"/>
        <end position="81"/>
    </location>
</feature>
<proteinExistence type="inferred from homology"/>